<gene>
    <name type="primary">MB</name>
</gene>
<dbReference type="EC" id="1.7.-.-" evidence="1"/>
<dbReference type="EC" id="1.11.1.-" evidence="1"/>
<dbReference type="PIR" id="A02491">
    <property type="entry name" value="MYLEM"/>
</dbReference>
<dbReference type="SMR" id="P02169"/>
<dbReference type="GO" id="GO:0070062">
    <property type="term" value="C:extracellular exosome"/>
    <property type="evidence" value="ECO:0007669"/>
    <property type="project" value="TreeGrafter"/>
</dbReference>
<dbReference type="GO" id="GO:0016528">
    <property type="term" value="C:sarcoplasm"/>
    <property type="evidence" value="ECO:0000250"/>
    <property type="project" value="UniProtKB"/>
</dbReference>
<dbReference type="GO" id="GO:0020037">
    <property type="term" value="F:heme binding"/>
    <property type="evidence" value="ECO:0007669"/>
    <property type="project" value="InterPro"/>
</dbReference>
<dbReference type="GO" id="GO:0046872">
    <property type="term" value="F:metal ion binding"/>
    <property type="evidence" value="ECO:0007669"/>
    <property type="project" value="UniProtKB-KW"/>
</dbReference>
<dbReference type="GO" id="GO:0098809">
    <property type="term" value="F:nitrite reductase activity"/>
    <property type="evidence" value="ECO:0000250"/>
    <property type="project" value="UniProtKB"/>
</dbReference>
<dbReference type="GO" id="GO:0019825">
    <property type="term" value="F:oxygen binding"/>
    <property type="evidence" value="ECO:0007669"/>
    <property type="project" value="InterPro"/>
</dbReference>
<dbReference type="GO" id="GO:0005344">
    <property type="term" value="F:oxygen carrier activity"/>
    <property type="evidence" value="ECO:0000250"/>
    <property type="project" value="UniProtKB"/>
</dbReference>
<dbReference type="GO" id="GO:0004601">
    <property type="term" value="F:peroxidase activity"/>
    <property type="evidence" value="ECO:0000250"/>
    <property type="project" value="UniProtKB"/>
</dbReference>
<dbReference type="GO" id="GO:0019430">
    <property type="term" value="P:removal of superoxide radicals"/>
    <property type="evidence" value="ECO:0000250"/>
    <property type="project" value="UniProtKB"/>
</dbReference>
<dbReference type="CDD" id="cd08926">
    <property type="entry name" value="Mb"/>
    <property type="match status" value="1"/>
</dbReference>
<dbReference type="Gene3D" id="6.10.140.2100">
    <property type="match status" value="1"/>
</dbReference>
<dbReference type="Gene3D" id="6.10.140.2110">
    <property type="match status" value="1"/>
</dbReference>
<dbReference type="InterPro" id="IPR000971">
    <property type="entry name" value="Globin"/>
</dbReference>
<dbReference type="InterPro" id="IPR009050">
    <property type="entry name" value="Globin-like_sf"/>
</dbReference>
<dbReference type="InterPro" id="IPR002335">
    <property type="entry name" value="Myoglobin"/>
</dbReference>
<dbReference type="PANTHER" id="PTHR47132">
    <property type="entry name" value="MYOGLOBIN"/>
    <property type="match status" value="1"/>
</dbReference>
<dbReference type="PANTHER" id="PTHR47132:SF1">
    <property type="entry name" value="MYOGLOBIN"/>
    <property type="match status" value="1"/>
</dbReference>
<dbReference type="Pfam" id="PF00042">
    <property type="entry name" value="Globin"/>
    <property type="match status" value="1"/>
</dbReference>
<dbReference type="PRINTS" id="PR00613">
    <property type="entry name" value="MYOGLOBIN"/>
</dbReference>
<dbReference type="SUPFAM" id="SSF46458">
    <property type="entry name" value="Globin-like"/>
    <property type="match status" value="1"/>
</dbReference>
<dbReference type="PROSITE" id="PS01033">
    <property type="entry name" value="GLOBIN"/>
    <property type="match status" value="1"/>
</dbReference>
<comment type="function">
    <text evidence="1">Monomeric heme protein which primary function is to store oxygen and facilitate its diffusion within muscle tissues. Reversibly binds oxygen through a pentacoordinated heme iron and enables its timely and efficient release as needed during periods of heightened demand. Depending on the oxidative conditions of tissues and cells, and in addition to its ability to bind oxygen, it also has a nitrite reductase activity whereby it regulates the production of bioactive nitric oxide. Under stress conditions, like hypoxia and anoxia, it also protects cells against reactive oxygen species thanks to its pseudoperoxidase activity.</text>
</comment>
<comment type="catalytic activity">
    <reaction evidence="1">
        <text>Fe(III)-heme b-[protein] + nitric oxide + H2O = Fe(II)-heme b-[protein] + nitrite + 2 H(+)</text>
        <dbReference type="Rhea" id="RHEA:77711"/>
        <dbReference type="Rhea" id="RHEA-COMP:18975"/>
        <dbReference type="Rhea" id="RHEA-COMP:18976"/>
        <dbReference type="ChEBI" id="CHEBI:15377"/>
        <dbReference type="ChEBI" id="CHEBI:15378"/>
        <dbReference type="ChEBI" id="CHEBI:16301"/>
        <dbReference type="ChEBI" id="CHEBI:16480"/>
        <dbReference type="ChEBI" id="CHEBI:55376"/>
        <dbReference type="ChEBI" id="CHEBI:60344"/>
    </reaction>
    <physiologicalReaction direction="right-to-left" evidence="1">
        <dbReference type="Rhea" id="RHEA:77713"/>
    </physiologicalReaction>
</comment>
<comment type="catalytic activity">
    <reaction evidence="1">
        <text>H2O2 + AH2 = A + 2 H2O</text>
        <dbReference type="Rhea" id="RHEA:30275"/>
        <dbReference type="ChEBI" id="CHEBI:13193"/>
        <dbReference type="ChEBI" id="CHEBI:15377"/>
        <dbReference type="ChEBI" id="CHEBI:16240"/>
        <dbReference type="ChEBI" id="CHEBI:17499"/>
    </reaction>
</comment>
<comment type="subunit">
    <text evidence="2">Monomeric.</text>
</comment>
<comment type="subcellular location">
    <subcellularLocation>
        <location evidence="1">Cytoplasm</location>
        <location evidence="1">Sarcoplasm</location>
    </subcellularLocation>
</comment>
<comment type="miscellaneous">
    <text>Some amides were assigned by electrophoretic mobility or by homology.</text>
</comment>
<comment type="similarity">
    <text evidence="7">Belongs to the globin family.</text>
</comment>
<name>MYG_LEPMU</name>
<protein>
    <recommendedName>
        <fullName>Myoglobin</fullName>
    </recommendedName>
    <alternativeName>
        <fullName evidence="1">Nitrite reductase MB</fullName>
        <ecNumber evidence="1">1.7.-.-</ecNumber>
    </alternativeName>
    <alternativeName>
        <fullName evidence="1">Pseudoperoxidase MB</fullName>
        <ecNumber evidence="1">1.11.1.-</ecNumber>
    </alternativeName>
</protein>
<feature type="chain" id="PRO_0000053310" description="Myoglobin">
    <location>
        <begin position="1"/>
        <end position="154"/>
    </location>
</feature>
<feature type="domain" description="Globin" evidence="7">
    <location>
        <begin position="2"/>
        <end position="148"/>
    </location>
</feature>
<feature type="binding site" evidence="5">
    <location>
        <position position="65"/>
    </location>
    <ligand>
        <name>nitrite</name>
        <dbReference type="ChEBI" id="CHEBI:16301"/>
    </ligand>
</feature>
<feature type="binding site" evidence="3 7">
    <location>
        <position position="65"/>
    </location>
    <ligand>
        <name>O2</name>
        <dbReference type="ChEBI" id="CHEBI:15379"/>
    </ligand>
</feature>
<feature type="binding site" description="proximal binding residue" evidence="1">
    <location>
        <position position="94"/>
    </location>
    <ligand>
        <name>heme b</name>
        <dbReference type="ChEBI" id="CHEBI:60344"/>
    </ligand>
    <ligandPart>
        <name>Fe</name>
        <dbReference type="ChEBI" id="CHEBI:18248"/>
    </ligandPart>
</feature>
<feature type="modified residue" description="Phosphoserine" evidence="6">
    <location>
        <position position="4"/>
    </location>
</feature>
<feature type="modified residue" description="Phosphothreonine" evidence="4">
    <location>
        <position position="68"/>
    </location>
</feature>
<proteinExistence type="evidence at protein level"/>
<sequence length="154" mass="17074">MGLSDGEWQLVLNVWGKVEADVGGHGQEVLIRLFTGHPETLEKFDKFKHLKTADEMKASEDLKKHGTTVLTALGGILKKKGQHEAELKPLAQSHATKHKIPIKYLEFISDAIVHVLHSKHPAEFGADAQAAMKKALELFRNDIAAKYKELGFQG</sequence>
<evidence type="ECO:0000250" key="1">
    <source>
        <dbReference type="UniProtKB" id="P02144"/>
    </source>
</evidence>
<evidence type="ECO:0000250" key="2">
    <source>
        <dbReference type="UniProtKB" id="P02185"/>
    </source>
</evidence>
<evidence type="ECO:0000250" key="3">
    <source>
        <dbReference type="UniProtKB" id="P02189"/>
    </source>
</evidence>
<evidence type="ECO:0000250" key="4">
    <source>
        <dbReference type="UniProtKB" id="P04247"/>
    </source>
</evidence>
<evidence type="ECO:0000250" key="5">
    <source>
        <dbReference type="UniProtKB" id="P68082"/>
    </source>
</evidence>
<evidence type="ECO:0000250" key="6">
    <source>
        <dbReference type="UniProtKB" id="Q9QZ76"/>
    </source>
</evidence>
<evidence type="ECO:0000255" key="7">
    <source>
        <dbReference type="PROSITE-ProRule" id="PRU00238"/>
    </source>
</evidence>
<reference key="1">
    <citation type="journal article" date="1973" name="Biochim. Biophys. Acta">
        <title>The myoglobin of primates. V. Prosimians: Galago crassicaudatus (thick-tailed galago) and Lepilemur mustelinus (sportive lemur).</title>
        <authorList>
            <person name="Romero-Herrera A.E."/>
            <person name="Lehmann H."/>
        </authorList>
    </citation>
    <scope>PARTIAL PROTEIN SEQUENCE</scope>
</reference>
<organism>
    <name type="scientific">Lepilemur mustelinus</name>
    <name type="common">Weasel sportive lemur</name>
    <dbReference type="NCBI Taxonomy" id="9453"/>
    <lineage>
        <taxon>Eukaryota</taxon>
        <taxon>Metazoa</taxon>
        <taxon>Chordata</taxon>
        <taxon>Craniata</taxon>
        <taxon>Vertebrata</taxon>
        <taxon>Euteleostomi</taxon>
        <taxon>Mammalia</taxon>
        <taxon>Eutheria</taxon>
        <taxon>Euarchontoglires</taxon>
        <taxon>Primates</taxon>
        <taxon>Strepsirrhini</taxon>
        <taxon>Lemuriformes</taxon>
        <taxon>Lepilemuridae</taxon>
        <taxon>Lepilemur</taxon>
    </lineage>
</organism>
<accession>P02169</accession>
<keyword id="KW-0963">Cytoplasm</keyword>
<keyword id="KW-0903">Direct protein sequencing</keyword>
<keyword id="KW-0349">Heme</keyword>
<keyword id="KW-0408">Iron</keyword>
<keyword id="KW-0479">Metal-binding</keyword>
<keyword id="KW-0514">Muscle protein</keyword>
<keyword id="KW-0560">Oxidoreductase</keyword>
<keyword id="KW-0561">Oxygen transport</keyword>
<keyword id="KW-0597">Phosphoprotein</keyword>
<keyword id="KW-0813">Transport</keyword>